<proteinExistence type="inferred from homology"/>
<organism>
    <name type="scientific">Leptospira borgpetersenii serovar Hardjo-bovis (strain JB197)</name>
    <dbReference type="NCBI Taxonomy" id="355277"/>
    <lineage>
        <taxon>Bacteria</taxon>
        <taxon>Pseudomonadati</taxon>
        <taxon>Spirochaetota</taxon>
        <taxon>Spirochaetia</taxon>
        <taxon>Leptospirales</taxon>
        <taxon>Leptospiraceae</taxon>
        <taxon>Leptospira</taxon>
    </lineage>
</organism>
<evidence type="ECO:0000255" key="1">
    <source>
        <dbReference type="HAMAP-Rule" id="MF_01365"/>
    </source>
</evidence>
<evidence type="ECO:0000305" key="2"/>
<protein>
    <recommendedName>
        <fullName evidence="1">Large ribosomal subunit protein uL6</fullName>
    </recommendedName>
    <alternativeName>
        <fullName evidence="2">50S ribosomal protein L6</fullName>
    </alternativeName>
</protein>
<accession>Q04PV3</accession>
<keyword id="KW-0687">Ribonucleoprotein</keyword>
<keyword id="KW-0689">Ribosomal protein</keyword>
<keyword id="KW-0694">RNA-binding</keyword>
<keyword id="KW-0699">rRNA-binding</keyword>
<sequence>MSRIGKAEIKLPDKVEVKQENANIKVKGPLGELSTPIFEGLSVKNENGIVKLERSNEDQKVVALHGLTRALLMNCVKGVSQGWEKNLEINGVGYRAQKRGEDLVMSLGYSHEVVYKAPKGIKIDVQEQLKIKVTGIDKQLVGQVAADIRSKRPPEPYKGKGIKYAEEFIKKKAGKTGKK</sequence>
<feature type="chain" id="PRO_1000055252" description="Large ribosomal subunit protein uL6">
    <location>
        <begin position="1"/>
        <end position="179"/>
    </location>
</feature>
<dbReference type="EMBL" id="CP000350">
    <property type="protein sequence ID" value="ABJ77067.1"/>
    <property type="molecule type" value="Genomic_DNA"/>
</dbReference>
<dbReference type="RefSeq" id="WP_004282124.1">
    <property type="nucleotide sequence ID" value="NC_008510.1"/>
</dbReference>
<dbReference type="SMR" id="Q04PV3"/>
<dbReference type="KEGG" id="lbj:LBJ_2644"/>
<dbReference type="HOGENOM" id="CLU_065464_1_2_12"/>
<dbReference type="Proteomes" id="UP000000656">
    <property type="component" value="Chromosome 1"/>
</dbReference>
<dbReference type="GO" id="GO:0022625">
    <property type="term" value="C:cytosolic large ribosomal subunit"/>
    <property type="evidence" value="ECO:0007669"/>
    <property type="project" value="TreeGrafter"/>
</dbReference>
<dbReference type="GO" id="GO:0019843">
    <property type="term" value="F:rRNA binding"/>
    <property type="evidence" value="ECO:0007669"/>
    <property type="project" value="UniProtKB-UniRule"/>
</dbReference>
<dbReference type="GO" id="GO:0003735">
    <property type="term" value="F:structural constituent of ribosome"/>
    <property type="evidence" value="ECO:0007669"/>
    <property type="project" value="InterPro"/>
</dbReference>
<dbReference type="GO" id="GO:0002181">
    <property type="term" value="P:cytoplasmic translation"/>
    <property type="evidence" value="ECO:0007669"/>
    <property type="project" value="TreeGrafter"/>
</dbReference>
<dbReference type="FunFam" id="3.90.930.12:FF:000001">
    <property type="entry name" value="50S ribosomal protein L6"/>
    <property type="match status" value="1"/>
</dbReference>
<dbReference type="FunFam" id="3.90.930.12:FF:000002">
    <property type="entry name" value="50S ribosomal protein L6"/>
    <property type="match status" value="1"/>
</dbReference>
<dbReference type="Gene3D" id="3.90.930.12">
    <property type="entry name" value="Ribosomal protein L6, alpha-beta domain"/>
    <property type="match status" value="2"/>
</dbReference>
<dbReference type="HAMAP" id="MF_01365_B">
    <property type="entry name" value="Ribosomal_uL6_B"/>
    <property type="match status" value="1"/>
</dbReference>
<dbReference type="InterPro" id="IPR000702">
    <property type="entry name" value="Ribosomal_uL6-like"/>
</dbReference>
<dbReference type="InterPro" id="IPR036789">
    <property type="entry name" value="Ribosomal_uL6-like_a/b-dom_sf"/>
</dbReference>
<dbReference type="InterPro" id="IPR020040">
    <property type="entry name" value="Ribosomal_uL6_a/b-dom"/>
</dbReference>
<dbReference type="InterPro" id="IPR019906">
    <property type="entry name" value="Ribosomal_uL6_bac-type"/>
</dbReference>
<dbReference type="InterPro" id="IPR002358">
    <property type="entry name" value="Ribosomal_uL6_CS"/>
</dbReference>
<dbReference type="NCBIfam" id="TIGR03654">
    <property type="entry name" value="L6_bact"/>
    <property type="match status" value="1"/>
</dbReference>
<dbReference type="PANTHER" id="PTHR11655">
    <property type="entry name" value="60S/50S RIBOSOMAL PROTEIN L6/L9"/>
    <property type="match status" value="1"/>
</dbReference>
<dbReference type="PANTHER" id="PTHR11655:SF14">
    <property type="entry name" value="LARGE RIBOSOMAL SUBUNIT PROTEIN UL6M"/>
    <property type="match status" value="1"/>
</dbReference>
<dbReference type="Pfam" id="PF00347">
    <property type="entry name" value="Ribosomal_L6"/>
    <property type="match status" value="2"/>
</dbReference>
<dbReference type="PIRSF" id="PIRSF002162">
    <property type="entry name" value="Ribosomal_L6"/>
    <property type="match status" value="1"/>
</dbReference>
<dbReference type="PRINTS" id="PR00059">
    <property type="entry name" value="RIBOSOMALL6"/>
</dbReference>
<dbReference type="SUPFAM" id="SSF56053">
    <property type="entry name" value="Ribosomal protein L6"/>
    <property type="match status" value="2"/>
</dbReference>
<dbReference type="PROSITE" id="PS00525">
    <property type="entry name" value="RIBOSOMAL_L6_1"/>
    <property type="match status" value="1"/>
</dbReference>
<reference key="1">
    <citation type="journal article" date="2006" name="Proc. Natl. Acad. Sci. U.S.A.">
        <title>Genome reduction in Leptospira borgpetersenii reflects limited transmission potential.</title>
        <authorList>
            <person name="Bulach D.M."/>
            <person name="Zuerner R.L."/>
            <person name="Wilson P."/>
            <person name="Seemann T."/>
            <person name="McGrath A."/>
            <person name="Cullen P.A."/>
            <person name="Davis J."/>
            <person name="Johnson M."/>
            <person name="Kuczek E."/>
            <person name="Alt D.P."/>
            <person name="Peterson-Burch B."/>
            <person name="Coppel R.L."/>
            <person name="Rood J.I."/>
            <person name="Davies J.K."/>
            <person name="Adler B."/>
        </authorList>
    </citation>
    <scope>NUCLEOTIDE SEQUENCE [LARGE SCALE GENOMIC DNA]</scope>
    <source>
        <strain>JB197</strain>
    </source>
</reference>
<comment type="function">
    <text evidence="1">This protein binds to the 23S rRNA, and is important in its secondary structure. It is located near the subunit interface in the base of the L7/L12 stalk, and near the tRNA binding site of the peptidyltransferase center.</text>
</comment>
<comment type="subunit">
    <text evidence="1">Part of the 50S ribosomal subunit.</text>
</comment>
<comment type="similarity">
    <text evidence="1">Belongs to the universal ribosomal protein uL6 family.</text>
</comment>
<gene>
    <name evidence="1" type="primary">rplF</name>
    <name type="ordered locus">LBJ_2644</name>
</gene>
<name>RL6_LEPBJ</name>